<proteinExistence type="inferred from homology"/>
<dbReference type="EMBL" id="CP000485">
    <property type="protein sequence ID" value="ABK83847.1"/>
    <property type="molecule type" value="Genomic_DNA"/>
</dbReference>
<dbReference type="RefSeq" id="WP_000268520.1">
    <property type="nucleotide sequence ID" value="NC_008600.1"/>
</dbReference>
<dbReference type="SMR" id="A0R9F4"/>
<dbReference type="GeneID" id="93010567"/>
<dbReference type="KEGG" id="btl:BALH_0452"/>
<dbReference type="HOGENOM" id="CLU_066607_4_0_9"/>
<dbReference type="GO" id="GO:0005737">
    <property type="term" value="C:cytoplasm"/>
    <property type="evidence" value="ECO:0007669"/>
    <property type="project" value="UniProtKB-SubCell"/>
</dbReference>
<dbReference type="GO" id="GO:0006282">
    <property type="term" value="P:regulation of DNA repair"/>
    <property type="evidence" value="ECO:0007669"/>
    <property type="project" value="UniProtKB-UniRule"/>
</dbReference>
<dbReference type="Gene3D" id="1.10.10.10">
    <property type="entry name" value="Winged helix-like DNA-binding domain superfamily/Winged helix DNA-binding domain"/>
    <property type="match status" value="4"/>
</dbReference>
<dbReference type="HAMAP" id="MF_01114">
    <property type="entry name" value="RecX"/>
    <property type="match status" value="1"/>
</dbReference>
<dbReference type="InterPro" id="IPR053926">
    <property type="entry name" value="RecX_HTH_1st"/>
</dbReference>
<dbReference type="InterPro" id="IPR053924">
    <property type="entry name" value="RecX_HTH_2nd"/>
</dbReference>
<dbReference type="InterPro" id="IPR053925">
    <property type="entry name" value="RecX_HTH_3rd"/>
</dbReference>
<dbReference type="InterPro" id="IPR003783">
    <property type="entry name" value="Regulatory_RecX"/>
</dbReference>
<dbReference type="InterPro" id="IPR036388">
    <property type="entry name" value="WH-like_DNA-bd_sf"/>
</dbReference>
<dbReference type="NCBIfam" id="NF010733">
    <property type="entry name" value="PRK14135.1"/>
    <property type="match status" value="1"/>
</dbReference>
<dbReference type="PANTHER" id="PTHR33602">
    <property type="entry name" value="REGULATORY PROTEIN RECX FAMILY PROTEIN"/>
    <property type="match status" value="1"/>
</dbReference>
<dbReference type="PANTHER" id="PTHR33602:SF1">
    <property type="entry name" value="REGULATORY PROTEIN RECX FAMILY PROTEIN"/>
    <property type="match status" value="1"/>
</dbReference>
<dbReference type="Pfam" id="PF21982">
    <property type="entry name" value="RecX_HTH1"/>
    <property type="match status" value="1"/>
</dbReference>
<dbReference type="Pfam" id="PF02631">
    <property type="entry name" value="RecX_HTH2"/>
    <property type="match status" value="1"/>
</dbReference>
<dbReference type="Pfam" id="PF21981">
    <property type="entry name" value="RecX_HTH3"/>
    <property type="match status" value="2"/>
</dbReference>
<evidence type="ECO:0000255" key="1">
    <source>
        <dbReference type="HAMAP-Rule" id="MF_01114"/>
    </source>
</evidence>
<feature type="chain" id="PRO_1000065159" description="Regulatory protein RecX">
    <location>
        <begin position="1"/>
        <end position="270"/>
    </location>
</feature>
<name>RECX_BACAH</name>
<reference key="1">
    <citation type="journal article" date="2007" name="J. Bacteriol.">
        <title>The complete genome sequence of Bacillus thuringiensis Al Hakam.</title>
        <authorList>
            <person name="Challacombe J.F."/>
            <person name="Altherr M.R."/>
            <person name="Xie G."/>
            <person name="Bhotika S.S."/>
            <person name="Brown N."/>
            <person name="Bruce D."/>
            <person name="Campbell C.S."/>
            <person name="Campbell M.L."/>
            <person name="Chen J."/>
            <person name="Chertkov O."/>
            <person name="Cleland C."/>
            <person name="Dimitrijevic M."/>
            <person name="Doggett N.A."/>
            <person name="Fawcett J.J."/>
            <person name="Glavina T."/>
            <person name="Goodwin L.A."/>
            <person name="Green L.D."/>
            <person name="Han C.S."/>
            <person name="Hill K.K."/>
            <person name="Hitchcock P."/>
            <person name="Jackson P.J."/>
            <person name="Keim P."/>
            <person name="Kewalramani A.R."/>
            <person name="Longmire J."/>
            <person name="Lucas S."/>
            <person name="Malfatti S."/>
            <person name="Martinez D."/>
            <person name="McMurry K."/>
            <person name="Meincke L.J."/>
            <person name="Misra M."/>
            <person name="Moseman B.L."/>
            <person name="Mundt M."/>
            <person name="Munk A.C."/>
            <person name="Okinaka R.T."/>
            <person name="Parson-Quintana B."/>
            <person name="Reilly L.P."/>
            <person name="Richardson P."/>
            <person name="Robinson D.L."/>
            <person name="Saunders E."/>
            <person name="Tapia R."/>
            <person name="Tesmer J.G."/>
            <person name="Thayer N."/>
            <person name="Thompson L.S."/>
            <person name="Tice H."/>
            <person name="Ticknor L.O."/>
            <person name="Wills P.L."/>
            <person name="Gilna P."/>
            <person name="Brettin T.S."/>
        </authorList>
    </citation>
    <scope>NUCLEOTIDE SEQUENCE [LARGE SCALE GENOMIC DNA]</scope>
    <source>
        <strain>Al Hakam</strain>
    </source>
</reference>
<keyword id="KW-0963">Cytoplasm</keyword>
<accession>A0R9F4</accession>
<gene>
    <name evidence="1" type="primary">recX</name>
    <name type="ordered locus">BALH_0452</name>
</gene>
<comment type="function">
    <text evidence="1">Modulates RecA activity.</text>
</comment>
<comment type="subcellular location">
    <subcellularLocation>
        <location evidence="1">Cytoplasm</location>
    </subcellularLocation>
</comment>
<comment type="similarity">
    <text evidence="1">Belongs to the RecX family.</text>
</comment>
<protein>
    <recommendedName>
        <fullName evidence="1">Regulatory protein RecX</fullName>
    </recommendedName>
</protein>
<sequence>MAVITKIEVQKRSKERFNIYIDKGQGEEYGFSVNEVILIKHGLQKGLEIDEIALGNILYNEEVQKAYLQAISYLSYQMRTKLEIEDFLRKKEVGQAIISEVVSKLLHDRYINDKEYAILYTRTQSNVNRKGPTVIKRELLNKGVQDLIITHSLQEYPKEKQIENALILIEKKKKSYQKHSFLQMKLKLDEMLVRKGYSRDVIQICLEELKDEKDDEKQQEALHYHGNKYYEKYKKYDGWTFENKMKQALYRKGFSIDEIEIFLQMKREEG</sequence>
<organism>
    <name type="scientific">Bacillus thuringiensis (strain Al Hakam)</name>
    <dbReference type="NCBI Taxonomy" id="412694"/>
    <lineage>
        <taxon>Bacteria</taxon>
        <taxon>Bacillati</taxon>
        <taxon>Bacillota</taxon>
        <taxon>Bacilli</taxon>
        <taxon>Bacillales</taxon>
        <taxon>Bacillaceae</taxon>
        <taxon>Bacillus</taxon>
        <taxon>Bacillus cereus group</taxon>
    </lineage>
</organism>